<organism>
    <name type="scientific">Corynebacterium efficiens (strain DSM 44549 / YS-314 / AJ 12310 / JCM 11189 / NBRC 100395)</name>
    <dbReference type="NCBI Taxonomy" id="196164"/>
    <lineage>
        <taxon>Bacteria</taxon>
        <taxon>Bacillati</taxon>
        <taxon>Actinomycetota</taxon>
        <taxon>Actinomycetes</taxon>
        <taxon>Mycobacteriales</taxon>
        <taxon>Corynebacteriaceae</taxon>
        <taxon>Corynebacterium</taxon>
    </lineage>
</organism>
<reference key="1">
    <citation type="journal article" date="2003" name="Genome Res.">
        <title>Comparative complete genome sequence analysis of the amino acid replacements responsible for the thermostability of Corynebacterium efficiens.</title>
        <authorList>
            <person name="Nishio Y."/>
            <person name="Nakamura Y."/>
            <person name="Kawarabayasi Y."/>
            <person name="Usuda Y."/>
            <person name="Kimura E."/>
            <person name="Sugimoto S."/>
            <person name="Matsui K."/>
            <person name="Yamagishi A."/>
            <person name="Kikuchi H."/>
            <person name="Ikeo K."/>
            <person name="Gojobori T."/>
        </authorList>
    </citation>
    <scope>NUCLEOTIDE SEQUENCE [LARGE SCALE GENOMIC DNA]</scope>
    <source>
        <strain>DSM 44549 / YS-314 / AJ 12310 / JCM 11189 / NBRC 100395</strain>
    </source>
</reference>
<keyword id="KW-0066">ATP synthesis</keyword>
<keyword id="KW-0067">ATP-binding</keyword>
<keyword id="KW-1003">Cell membrane</keyword>
<keyword id="KW-0139">CF(1)</keyword>
<keyword id="KW-0375">Hydrogen ion transport</keyword>
<keyword id="KW-0406">Ion transport</keyword>
<keyword id="KW-0472">Membrane</keyword>
<keyword id="KW-0547">Nucleotide-binding</keyword>
<keyword id="KW-1185">Reference proteome</keyword>
<keyword id="KW-1278">Translocase</keyword>
<keyword id="KW-0813">Transport</keyword>
<sequence>MAELTISSDEIRSAIANYTSSYSAEASREEVGVVISAADGIAQVSGLPSVMANELLEFPGGVIGVAQNLDTDSVGVVVLGNYELLKEGDQVRRTGDVLSIPVGEKFLGRVINPLGQPIDGLGEIVAEEDRVLELQAPSVLERQPVEEPMATGIKAIDAMTPIGRGQRQLIIGDRKTGKTAVCVDTILNQKANWETGDKTKQVRCIYVAIGQKGSTIAALRKTLEEQGALEYTTIVAAPASDAAGFKWLAPFAGAALAQHWMYQGNHVLVIYDDLTKQAEAYRAISLLLRRPPGREAYPGDVFYLHSRLLERAAKLSDDLGAGSITALPIIETKANDVSAFIPTNVISITDGQVFLESDLFNRGVRPAINVGISVSRVGGAAQTKGMKKVAGSLRLDLAAYRDLEAFATFASDLDAASKAQLERGQRLVQLLIQSENAPQAVEYQIISLWLAGEGAFDNVPVDDVRRFETELHEYLGSNAPQVYEQIAGGAVLSDESKETLLQATEQFKGTFQTTDGTRIINEPEVDALDAGQVRKDQLTVSRKVGK</sequence>
<proteinExistence type="inferred from homology"/>
<accession>Q8FQ22</accession>
<gene>
    <name evidence="1" type="primary">atpA</name>
    <name type="ordered locus">CE1313</name>
</gene>
<name>ATPA_COREF</name>
<dbReference type="EC" id="7.1.2.2" evidence="1"/>
<dbReference type="EMBL" id="BA000035">
    <property type="protein sequence ID" value="BAC18123.1"/>
    <property type="status" value="ALT_INIT"/>
    <property type="molecule type" value="Genomic_DNA"/>
</dbReference>
<dbReference type="RefSeq" id="WP_011075387.1">
    <property type="nucleotide sequence ID" value="NC_004369.1"/>
</dbReference>
<dbReference type="SMR" id="Q8FQ22"/>
<dbReference type="STRING" id="196164.gene:10741722"/>
<dbReference type="KEGG" id="cef:CE1313"/>
<dbReference type="eggNOG" id="COG0056">
    <property type="taxonomic scope" value="Bacteria"/>
</dbReference>
<dbReference type="HOGENOM" id="CLU_010091_2_1_11"/>
<dbReference type="OrthoDB" id="9803053at2"/>
<dbReference type="Proteomes" id="UP000001409">
    <property type="component" value="Chromosome"/>
</dbReference>
<dbReference type="GO" id="GO:0005886">
    <property type="term" value="C:plasma membrane"/>
    <property type="evidence" value="ECO:0007669"/>
    <property type="project" value="UniProtKB-SubCell"/>
</dbReference>
<dbReference type="GO" id="GO:0045259">
    <property type="term" value="C:proton-transporting ATP synthase complex"/>
    <property type="evidence" value="ECO:0007669"/>
    <property type="project" value="UniProtKB-KW"/>
</dbReference>
<dbReference type="GO" id="GO:0043531">
    <property type="term" value="F:ADP binding"/>
    <property type="evidence" value="ECO:0007669"/>
    <property type="project" value="TreeGrafter"/>
</dbReference>
<dbReference type="GO" id="GO:0005524">
    <property type="term" value="F:ATP binding"/>
    <property type="evidence" value="ECO:0007669"/>
    <property type="project" value="UniProtKB-UniRule"/>
</dbReference>
<dbReference type="GO" id="GO:0046933">
    <property type="term" value="F:proton-transporting ATP synthase activity, rotational mechanism"/>
    <property type="evidence" value="ECO:0007669"/>
    <property type="project" value="UniProtKB-UniRule"/>
</dbReference>
<dbReference type="CDD" id="cd18113">
    <property type="entry name" value="ATP-synt_F1_alpha_C"/>
    <property type="match status" value="1"/>
</dbReference>
<dbReference type="CDD" id="cd18116">
    <property type="entry name" value="ATP-synt_F1_alpha_N"/>
    <property type="match status" value="1"/>
</dbReference>
<dbReference type="CDD" id="cd01132">
    <property type="entry name" value="F1-ATPase_alpha_CD"/>
    <property type="match status" value="1"/>
</dbReference>
<dbReference type="FunFam" id="1.20.150.20:FF:000001">
    <property type="entry name" value="ATP synthase subunit alpha"/>
    <property type="match status" value="1"/>
</dbReference>
<dbReference type="FunFam" id="3.40.50.300:FF:000002">
    <property type="entry name" value="ATP synthase subunit alpha"/>
    <property type="match status" value="1"/>
</dbReference>
<dbReference type="Gene3D" id="2.40.30.20">
    <property type="match status" value="1"/>
</dbReference>
<dbReference type="Gene3D" id="1.20.150.20">
    <property type="entry name" value="ATP synthase alpha/beta chain, C-terminal domain"/>
    <property type="match status" value="1"/>
</dbReference>
<dbReference type="Gene3D" id="3.40.50.300">
    <property type="entry name" value="P-loop containing nucleotide triphosphate hydrolases"/>
    <property type="match status" value="1"/>
</dbReference>
<dbReference type="HAMAP" id="MF_01346">
    <property type="entry name" value="ATP_synth_alpha_bact"/>
    <property type="match status" value="1"/>
</dbReference>
<dbReference type="InterPro" id="IPR023366">
    <property type="entry name" value="ATP_synth_asu-like_sf"/>
</dbReference>
<dbReference type="InterPro" id="IPR000793">
    <property type="entry name" value="ATP_synth_asu_C"/>
</dbReference>
<dbReference type="InterPro" id="IPR038376">
    <property type="entry name" value="ATP_synth_asu_C_sf"/>
</dbReference>
<dbReference type="InterPro" id="IPR033732">
    <property type="entry name" value="ATP_synth_F1_a_nt-bd_dom"/>
</dbReference>
<dbReference type="InterPro" id="IPR005294">
    <property type="entry name" value="ATP_synth_F1_asu"/>
</dbReference>
<dbReference type="InterPro" id="IPR020003">
    <property type="entry name" value="ATPase_a/bsu_AS"/>
</dbReference>
<dbReference type="InterPro" id="IPR004100">
    <property type="entry name" value="ATPase_F1/V1/A1_a/bsu_N"/>
</dbReference>
<dbReference type="InterPro" id="IPR036121">
    <property type="entry name" value="ATPase_F1/V1/A1_a/bsu_N_sf"/>
</dbReference>
<dbReference type="InterPro" id="IPR000194">
    <property type="entry name" value="ATPase_F1/V1/A1_a/bsu_nucl-bd"/>
</dbReference>
<dbReference type="InterPro" id="IPR027417">
    <property type="entry name" value="P-loop_NTPase"/>
</dbReference>
<dbReference type="NCBIfam" id="TIGR00962">
    <property type="entry name" value="atpA"/>
    <property type="match status" value="1"/>
</dbReference>
<dbReference type="NCBIfam" id="NF009884">
    <property type="entry name" value="PRK13343.1"/>
    <property type="match status" value="1"/>
</dbReference>
<dbReference type="PANTHER" id="PTHR48082">
    <property type="entry name" value="ATP SYNTHASE SUBUNIT ALPHA, MITOCHONDRIAL"/>
    <property type="match status" value="1"/>
</dbReference>
<dbReference type="PANTHER" id="PTHR48082:SF2">
    <property type="entry name" value="ATP SYNTHASE SUBUNIT ALPHA, MITOCHONDRIAL"/>
    <property type="match status" value="1"/>
</dbReference>
<dbReference type="Pfam" id="PF00006">
    <property type="entry name" value="ATP-synt_ab"/>
    <property type="match status" value="1"/>
</dbReference>
<dbReference type="Pfam" id="PF00306">
    <property type="entry name" value="ATP-synt_ab_C"/>
    <property type="match status" value="1"/>
</dbReference>
<dbReference type="Pfam" id="PF02874">
    <property type="entry name" value="ATP-synt_ab_N"/>
    <property type="match status" value="1"/>
</dbReference>
<dbReference type="SUPFAM" id="SSF47917">
    <property type="entry name" value="C-terminal domain of alpha and beta subunits of F1 ATP synthase"/>
    <property type="match status" value="1"/>
</dbReference>
<dbReference type="SUPFAM" id="SSF50615">
    <property type="entry name" value="N-terminal domain of alpha and beta subunits of F1 ATP synthase"/>
    <property type="match status" value="1"/>
</dbReference>
<dbReference type="SUPFAM" id="SSF52540">
    <property type="entry name" value="P-loop containing nucleoside triphosphate hydrolases"/>
    <property type="match status" value="1"/>
</dbReference>
<dbReference type="PROSITE" id="PS00152">
    <property type="entry name" value="ATPASE_ALPHA_BETA"/>
    <property type="match status" value="1"/>
</dbReference>
<protein>
    <recommendedName>
        <fullName evidence="1">ATP synthase subunit alpha</fullName>
        <ecNumber evidence="1">7.1.2.2</ecNumber>
    </recommendedName>
    <alternativeName>
        <fullName evidence="1">ATP synthase F1 sector subunit alpha</fullName>
    </alternativeName>
    <alternativeName>
        <fullName evidence="1">F-ATPase subunit alpha</fullName>
    </alternativeName>
</protein>
<comment type="function">
    <text evidence="1">Produces ATP from ADP in the presence of a proton gradient across the membrane. The alpha chain is a regulatory subunit.</text>
</comment>
<comment type="catalytic activity">
    <reaction evidence="1">
        <text>ATP + H2O + 4 H(+)(in) = ADP + phosphate + 5 H(+)(out)</text>
        <dbReference type="Rhea" id="RHEA:57720"/>
        <dbReference type="ChEBI" id="CHEBI:15377"/>
        <dbReference type="ChEBI" id="CHEBI:15378"/>
        <dbReference type="ChEBI" id="CHEBI:30616"/>
        <dbReference type="ChEBI" id="CHEBI:43474"/>
        <dbReference type="ChEBI" id="CHEBI:456216"/>
        <dbReference type="EC" id="7.1.2.2"/>
    </reaction>
</comment>
<comment type="subunit">
    <text evidence="1">F-type ATPases have 2 components, CF(1) - the catalytic core - and CF(0) - the membrane proton channel. CF(1) has five subunits: alpha(3), beta(3), gamma(1), delta(1), epsilon(1). CF(0) has three main subunits: a(1), b(2) and c(9-12). The alpha and beta chains form an alternating ring which encloses part of the gamma chain. CF(1) is attached to CF(0) by a central stalk formed by the gamma and epsilon chains, while a peripheral stalk is formed by the delta and b chains.</text>
</comment>
<comment type="subcellular location">
    <subcellularLocation>
        <location evidence="1">Cell membrane</location>
        <topology evidence="1">Peripheral membrane protein</topology>
    </subcellularLocation>
</comment>
<comment type="similarity">
    <text evidence="1">Belongs to the ATPase alpha/beta chains family.</text>
</comment>
<comment type="sequence caution" evidence="2">
    <conflict type="erroneous initiation">
        <sequence resource="EMBL-CDS" id="BAC18123"/>
    </conflict>
</comment>
<evidence type="ECO:0000255" key="1">
    <source>
        <dbReference type="HAMAP-Rule" id="MF_01346"/>
    </source>
</evidence>
<evidence type="ECO:0000305" key="2"/>
<feature type="chain" id="PRO_0000238235" description="ATP synthase subunit alpha">
    <location>
        <begin position="1"/>
        <end position="546"/>
    </location>
</feature>
<feature type="binding site" evidence="1">
    <location>
        <begin position="172"/>
        <end position="179"/>
    </location>
    <ligand>
        <name>ATP</name>
        <dbReference type="ChEBI" id="CHEBI:30616"/>
    </ligand>
</feature>
<feature type="site" description="Required for activity" evidence="1">
    <location>
        <position position="373"/>
    </location>
</feature>